<feature type="chain" id="PRO_0000054907" description="Enoyl-[acyl-carrier-protein] reductase [NADH] FabI">
    <location>
        <begin position="1"/>
        <end position="55" status="greater than"/>
    </location>
</feature>
<feature type="binding site" evidence="1">
    <location>
        <position position="20"/>
    </location>
    <ligand>
        <name>NAD(+)</name>
        <dbReference type="ChEBI" id="CHEBI:57540"/>
    </ligand>
</feature>
<feature type="binding site" evidence="1">
    <location>
        <begin position="26"/>
        <end position="27"/>
    </location>
    <ligand>
        <name>NAD(+)</name>
        <dbReference type="ChEBI" id="CHEBI:57540"/>
    </ligand>
</feature>
<feature type="non-terminal residue">
    <location>
        <position position="55"/>
    </location>
</feature>
<accession>Q9X450</accession>
<dbReference type="EC" id="1.3.1.9"/>
<dbReference type="EMBL" id="AF095903">
    <property type="protein sequence ID" value="AAD24359.1"/>
    <property type="molecule type" value="Genomic_DNA"/>
</dbReference>
<dbReference type="SMR" id="Q9X450"/>
<dbReference type="UniPathway" id="UPA00094"/>
<dbReference type="GO" id="GO:0004318">
    <property type="term" value="F:enoyl-[acyl-carrier-protein] reductase (NADH) activity"/>
    <property type="evidence" value="ECO:0000250"/>
    <property type="project" value="UniProtKB"/>
</dbReference>
<dbReference type="GO" id="GO:0042802">
    <property type="term" value="F:identical protein binding"/>
    <property type="evidence" value="ECO:0000250"/>
    <property type="project" value="UniProtKB"/>
</dbReference>
<dbReference type="GO" id="GO:0030497">
    <property type="term" value="P:fatty acid elongation"/>
    <property type="evidence" value="ECO:0000250"/>
    <property type="project" value="UniProtKB"/>
</dbReference>
<dbReference type="InterPro" id="IPR036291">
    <property type="entry name" value="NAD(P)-bd_dom_sf"/>
</dbReference>
<dbReference type="InterPro" id="IPR002347">
    <property type="entry name" value="SDR_fam"/>
</dbReference>
<dbReference type="Pfam" id="PF13561">
    <property type="entry name" value="adh_short_C2"/>
    <property type="match status" value="1"/>
</dbReference>
<dbReference type="SUPFAM" id="SSF51735">
    <property type="entry name" value="NAD(P)-binding Rossmann-fold domains"/>
    <property type="match status" value="1"/>
</dbReference>
<name>FABI_RHIML</name>
<sequence>MSIPTVKAKLLQGRKGLIVGIANDRSIAWGRARAFRALGAEIAVTYLNDKALPLV</sequence>
<evidence type="ECO:0000250" key="1"/>
<evidence type="ECO:0000305" key="2"/>
<comment type="function">
    <text evidence="1">Catalyzes the reduction of a carbon-carbon double bond in an enoyl moiety that is covalently linked to an acyl carrier protein (ACP). Involved in the elongation cycle of fatty acid which are used in the lipid metabolism (By similarity).</text>
</comment>
<comment type="catalytic activity">
    <reaction>
        <text>a 2,3-saturated acyl-[ACP] + NAD(+) = a (2E)-enoyl-[ACP] + NADH + H(+)</text>
        <dbReference type="Rhea" id="RHEA:10240"/>
        <dbReference type="Rhea" id="RHEA-COMP:9925"/>
        <dbReference type="Rhea" id="RHEA-COMP:9926"/>
        <dbReference type="ChEBI" id="CHEBI:15378"/>
        <dbReference type="ChEBI" id="CHEBI:57540"/>
        <dbReference type="ChEBI" id="CHEBI:57945"/>
        <dbReference type="ChEBI" id="CHEBI:78784"/>
        <dbReference type="ChEBI" id="CHEBI:78785"/>
        <dbReference type="EC" id="1.3.1.9"/>
    </reaction>
</comment>
<comment type="pathway">
    <text>Lipid metabolism; fatty acid biosynthesis.</text>
</comment>
<comment type="subunit">
    <text evidence="1">Homotetramer.</text>
</comment>
<comment type="similarity">
    <text evidence="2">Belongs to the short-chain dehydrogenases/reductases (SDR) family. FabI subfamily.</text>
</comment>
<reference key="1">
    <citation type="journal article" date="1999" name="J. Bacteriol.">
        <title>Genes coding for phosphotransacetylase and acetate kinase in Sinorhizobium meliloti are in an operon that is inducible by phosphate stress and controlled by phoB.</title>
        <authorList>
            <person name="Summers M.L."/>
            <person name="Denton M.C."/>
            <person name="McDermott T.R."/>
        </authorList>
    </citation>
    <scope>NUCLEOTIDE SEQUENCE [GENOMIC DNA]</scope>
    <source>
        <strain>104A14</strain>
    </source>
</reference>
<organism>
    <name type="scientific">Rhizobium meliloti</name>
    <name type="common">Ensifer meliloti</name>
    <name type="synonym">Sinorhizobium meliloti</name>
    <dbReference type="NCBI Taxonomy" id="382"/>
    <lineage>
        <taxon>Bacteria</taxon>
        <taxon>Pseudomonadati</taxon>
        <taxon>Pseudomonadota</taxon>
        <taxon>Alphaproteobacteria</taxon>
        <taxon>Hyphomicrobiales</taxon>
        <taxon>Rhizobiaceae</taxon>
        <taxon>Sinorhizobium/Ensifer group</taxon>
        <taxon>Sinorhizobium</taxon>
    </lineage>
</organism>
<gene>
    <name type="primary">fabI</name>
</gene>
<protein>
    <recommendedName>
        <fullName>Enoyl-[acyl-carrier-protein] reductase [NADH] FabI</fullName>
        <shortName>ENR</shortName>
        <ecNumber>1.3.1.9</ecNumber>
    </recommendedName>
    <alternativeName>
        <fullName>NADH-dependent enoyl-ACP reductase</fullName>
    </alternativeName>
</protein>
<keyword id="KW-0275">Fatty acid biosynthesis</keyword>
<keyword id="KW-0276">Fatty acid metabolism</keyword>
<keyword id="KW-0444">Lipid biosynthesis</keyword>
<keyword id="KW-0443">Lipid metabolism</keyword>
<keyword id="KW-0520">NAD</keyword>
<keyword id="KW-0560">Oxidoreductase</keyword>
<proteinExistence type="inferred from homology"/>